<proteinExistence type="evidence at protein level"/>
<sequence length="824" mass="88221">MLQICIRRVTVKNDNAVEHNNQDCFLSRTSSRDESHALHKVRESVCGMVILPDKAHSSIRYQDHQLYFCSASCESKFKAHPDHYFTEDASEHHHHHDHHEVSPDKIKQSHRQAEKEISEGVWTCPMHPEIRRSGPGSCPVCGMALEPLVATASTGTSDELRDMTRRFWLGLLLAFPVLILEMGSHLFPALRNTVPPQYNTWLQLLLASPVVLWCGWPFFARAGMSLRNRSLNMFTLVAMGTGVAWVYSVIATVFPSWFPASFRNMDGLVAIYFEAAAVITVLVLLGQVLELRAREQTSGAITALLNLAPKTARRLDQDGHETDINAEDVLPGDKLRIRPGESIPVDGIVVEGKTTVDESMVTGESMPVTKTEGEPVIGGTINQTGSLIIRAEKVGDETMLSRIVQMVADAQRSRAPIQRMADSVSGWFVPLVILIAVVAFMIWSVWGPEPRMAHGLIAAVSVLIIACPCALGLATPMSIMVGVGKGAQAGVLIKNAEALERLEKVDTLVVDKTGTLTEGSPTVTGIISLNPGGETSLLRVTAAVDKGSQHPLGMAVVKAAQEKGIAIPAVTHFNAPSGKGVSGDVEGQRVVIGNELAMQENSIVIDNQKAVADTLRMEGTTVIYVATDGHLAGLIAISDPVKATTPDALKALRQAGIRIVMLTGDNQLTAEAVARKLGIDEVEAGILPDGKKAVITRLKASGHVVAMAGDGVNDAPALAAADVGIAMGTGTDVAIESAGVTLLKGDLMILNRARHLSEITMKNIRQNLFFAFIYNALGVPVAAGLLYPVYGILLSPVIAAAAMALSSVSVIVNALRLKSVRLGK</sequence>
<geneLocation type="plasmid">
    <name>pMG101</name>
</geneLocation>
<name>SILP_SALTM</name>
<comment type="function">
    <text>Component of the sil cation-efflux system that confers resistance to silver.</text>
</comment>
<comment type="catalytic activity">
    <reaction evidence="4">
        <text>Ag(+)(in) + ATP + H2O = Ag(+)(out) + ADP + phosphate + H(+)</text>
        <dbReference type="Rhea" id="RHEA:14733"/>
        <dbReference type="ChEBI" id="CHEBI:15377"/>
        <dbReference type="ChEBI" id="CHEBI:15378"/>
        <dbReference type="ChEBI" id="CHEBI:30616"/>
        <dbReference type="ChEBI" id="CHEBI:43474"/>
        <dbReference type="ChEBI" id="CHEBI:49468"/>
        <dbReference type="ChEBI" id="CHEBI:456216"/>
        <dbReference type="EC" id="7.2.2.15"/>
    </reaction>
</comment>
<comment type="subcellular location">
    <subcellularLocation>
        <location evidence="5">Cell membrane</location>
        <topology evidence="5">Multi-pass membrane protein</topology>
    </subcellularLocation>
</comment>
<comment type="similarity">
    <text evidence="5">Belongs to the cation transport ATPase (P-type) (TC 3.A.3) family. Type IB subfamily.</text>
</comment>
<keyword id="KW-0067">ATP-binding</keyword>
<keyword id="KW-1003">Cell membrane</keyword>
<keyword id="KW-0472">Membrane</keyword>
<keyword id="KW-0479">Metal-binding</keyword>
<keyword id="KW-0547">Nucleotide-binding</keyword>
<keyword id="KW-0597">Phosphoprotein</keyword>
<keyword id="KW-0614">Plasmid</keyword>
<keyword id="KW-1278">Translocase</keyword>
<keyword id="KW-0812">Transmembrane</keyword>
<keyword id="KW-1133">Transmembrane helix</keyword>
<protein>
    <recommendedName>
        <fullName>Silver exporting P-type ATPase</fullName>
        <ecNumber evidence="4">7.2.2.15</ecNumber>
    </recommendedName>
</protein>
<evidence type="ECO:0000250" key="1"/>
<evidence type="ECO:0000255" key="2"/>
<evidence type="ECO:0000256" key="3">
    <source>
        <dbReference type="SAM" id="MobiDB-lite"/>
    </source>
</evidence>
<evidence type="ECO:0000269" key="4">
    <source>
    </source>
</evidence>
<evidence type="ECO:0000305" key="5"/>
<gene>
    <name type="primary">silP</name>
</gene>
<accession>Q9ZHC7</accession>
<organism>
    <name type="scientific">Salmonella typhimurium</name>
    <dbReference type="NCBI Taxonomy" id="90371"/>
    <lineage>
        <taxon>Bacteria</taxon>
        <taxon>Pseudomonadati</taxon>
        <taxon>Pseudomonadota</taxon>
        <taxon>Gammaproteobacteria</taxon>
        <taxon>Enterobacterales</taxon>
        <taxon>Enterobacteriaceae</taxon>
        <taxon>Salmonella</taxon>
    </lineage>
</organism>
<feature type="chain" id="PRO_0000046331" description="Silver exporting P-type ATPase">
    <location>
        <begin position="1"/>
        <end position="824"/>
    </location>
</feature>
<feature type="transmembrane region" description="Helical" evidence="2">
    <location>
        <begin position="167"/>
        <end position="187"/>
    </location>
</feature>
<feature type="transmembrane region" description="Helical" evidence="2">
    <location>
        <begin position="200"/>
        <end position="220"/>
    </location>
</feature>
<feature type="transmembrane region" description="Helical" evidence="2">
    <location>
        <begin position="234"/>
        <end position="254"/>
    </location>
</feature>
<feature type="transmembrane region" description="Helical" evidence="2">
    <location>
        <begin position="268"/>
        <end position="288"/>
    </location>
</feature>
<feature type="transmembrane region" description="Helical" evidence="2">
    <location>
        <begin position="427"/>
        <end position="447"/>
    </location>
</feature>
<feature type="transmembrane region" description="Helical" evidence="2">
    <location>
        <begin position="455"/>
        <end position="475"/>
    </location>
</feature>
<feature type="transmembrane region" description="Helical" evidence="2">
    <location>
        <begin position="764"/>
        <end position="784"/>
    </location>
</feature>
<feature type="transmembrane region" description="Helical" evidence="2">
    <location>
        <begin position="785"/>
        <end position="805"/>
    </location>
</feature>
<feature type="region of interest" description="Disordered" evidence="3">
    <location>
        <begin position="89"/>
        <end position="112"/>
    </location>
</feature>
<feature type="compositionally biased region" description="Basic and acidic residues" evidence="3">
    <location>
        <begin position="98"/>
        <end position="112"/>
    </location>
</feature>
<feature type="active site" description="4-aspartylphosphate intermediate" evidence="1">
    <location>
        <position position="511"/>
    </location>
</feature>
<dbReference type="EC" id="7.2.2.15" evidence="4"/>
<dbReference type="EMBL" id="AF067954">
    <property type="protein sequence ID" value="AAD11750.1"/>
    <property type="molecule type" value="Genomic_DNA"/>
</dbReference>
<dbReference type="SMR" id="Q9ZHC7"/>
<dbReference type="TCDB" id="3.A.3.5.4">
    <property type="family name" value="the p-type atpase (p-atpase) superfamily"/>
</dbReference>
<dbReference type="KEGG" id="ag:AAD11750"/>
<dbReference type="GO" id="GO:0005886">
    <property type="term" value="C:plasma membrane"/>
    <property type="evidence" value="ECO:0007669"/>
    <property type="project" value="UniProtKB-SubCell"/>
</dbReference>
<dbReference type="GO" id="GO:0005524">
    <property type="term" value="F:ATP binding"/>
    <property type="evidence" value="ECO:0007669"/>
    <property type="project" value="UniProtKB-KW"/>
</dbReference>
<dbReference type="GO" id="GO:0016887">
    <property type="term" value="F:ATP hydrolysis activity"/>
    <property type="evidence" value="ECO:0007669"/>
    <property type="project" value="InterPro"/>
</dbReference>
<dbReference type="GO" id="GO:0005507">
    <property type="term" value="F:copper ion binding"/>
    <property type="evidence" value="ECO:0007669"/>
    <property type="project" value="TreeGrafter"/>
</dbReference>
<dbReference type="GO" id="GO:0043682">
    <property type="term" value="F:P-type divalent copper transporter activity"/>
    <property type="evidence" value="ECO:0007669"/>
    <property type="project" value="TreeGrafter"/>
</dbReference>
<dbReference type="GO" id="GO:0015445">
    <property type="term" value="F:P-type silver transporter activity"/>
    <property type="evidence" value="ECO:0007669"/>
    <property type="project" value="UniProtKB-EC"/>
</dbReference>
<dbReference type="GO" id="GO:0055070">
    <property type="term" value="P:copper ion homeostasis"/>
    <property type="evidence" value="ECO:0007669"/>
    <property type="project" value="TreeGrafter"/>
</dbReference>
<dbReference type="CDD" id="cd02094">
    <property type="entry name" value="P-type_ATPase_Cu-like"/>
    <property type="match status" value="1"/>
</dbReference>
<dbReference type="FunFam" id="2.70.150.10:FF:000020">
    <property type="entry name" value="Copper-exporting P-type ATPase A"/>
    <property type="match status" value="1"/>
</dbReference>
<dbReference type="Gene3D" id="3.40.1110.10">
    <property type="entry name" value="Calcium-transporting ATPase, cytoplasmic domain N"/>
    <property type="match status" value="1"/>
</dbReference>
<dbReference type="Gene3D" id="2.70.150.10">
    <property type="entry name" value="Calcium-transporting ATPase, cytoplasmic transduction domain A"/>
    <property type="match status" value="1"/>
</dbReference>
<dbReference type="Gene3D" id="3.40.50.1000">
    <property type="entry name" value="HAD superfamily/HAD-like"/>
    <property type="match status" value="1"/>
</dbReference>
<dbReference type="InterPro" id="IPR023299">
    <property type="entry name" value="ATPase_P-typ_cyto_dom_N"/>
</dbReference>
<dbReference type="InterPro" id="IPR018303">
    <property type="entry name" value="ATPase_P-typ_P_site"/>
</dbReference>
<dbReference type="InterPro" id="IPR023298">
    <property type="entry name" value="ATPase_P-typ_TM_dom_sf"/>
</dbReference>
<dbReference type="InterPro" id="IPR008250">
    <property type="entry name" value="ATPase_P-typ_transduc_dom_A_sf"/>
</dbReference>
<dbReference type="InterPro" id="IPR036412">
    <property type="entry name" value="HAD-like_sf"/>
</dbReference>
<dbReference type="InterPro" id="IPR023214">
    <property type="entry name" value="HAD_sf"/>
</dbReference>
<dbReference type="InterPro" id="IPR045800">
    <property type="entry name" value="HMBD"/>
</dbReference>
<dbReference type="InterPro" id="IPR027256">
    <property type="entry name" value="P-typ_ATPase_IB"/>
</dbReference>
<dbReference type="InterPro" id="IPR001757">
    <property type="entry name" value="P_typ_ATPase"/>
</dbReference>
<dbReference type="InterPro" id="IPR044492">
    <property type="entry name" value="P_typ_ATPase_HD_dom"/>
</dbReference>
<dbReference type="InterPro" id="IPR011017">
    <property type="entry name" value="TRASH_dom"/>
</dbReference>
<dbReference type="NCBIfam" id="TIGR01511">
    <property type="entry name" value="ATPase-IB1_Cu"/>
    <property type="match status" value="1"/>
</dbReference>
<dbReference type="NCBIfam" id="TIGR01525">
    <property type="entry name" value="ATPase-IB_hvy"/>
    <property type="match status" value="1"/>
</dbReference>
<dbReference type="NCBIfam" id="TIGR01494">
    <property type="entry name" value="ATPase_P-type"/>
    <property type="match status" value="1"/>
</dbReference>
<dbReference type="PANTHER" id="PTHR43520">
    <property type="entry name" value="ATP7, ISOFORM B"/>
    <property type="match status" value="1"/>
</dbReference>
<dbReference type="PANTHER" id="PTHR43520:SF8">
    <property type="entry name" value="P-TYPE CU(+) TRANSPORTER"/>
    <property type="match status" value="1"/>
</dbReference>
<dbReference type="Pfam" id="PF00122">
    <property type="entry name" value="E1-E2_ATPase"/>
    <property type="match status" value="1"/>
</dbReference>
<dbReference type="Pfam" id="PF19335">
    <property type="entry name" value="HMBD"/>
    <property type="match status" value="1"/>
</dbReference>
<dbReference type="Pfam" id="PF00702">
    <property type="entry name" value="Hydrolase"/>
    <property type="match status" value="1"/>
</dbReference>
<dbReference type="PRINTS" id="PR00119">
    <property type="entry name" value="CATATPASE"/>
</dbReference>
<dbReference type="PRINTS" id="PR00943">
    <property type="entry name" value="CUATPASE"/>
</dbReference>
<dbReference type="SFLD" id="SFLDS00003">
    <property type="entry name" value="Haloacid_Dehalogenase"/>
    <property type="match status" value="1"/>
</dbReference>
<dbReference type="SFLD" id="SFLDF00027">
    <property type="entry name" value="p-type_atpase"/>
    <property type="match status" value="1"/>
</dbReference>
<dbReference type="SMART" id="SM00746">
    <property type="entry name" value="TRASH"/>
    <property type="match status" value="1"/>
</dbReference>
<dbReference type="SUPFAM" id="SSF81653">
    <property type="entry name" value="Calcium ATPase, transduction domain A"/>
    <property type="match status" value="1"/>
</dbReference>
<dbReference type="SUPFAM" id="SSF81665">
    <property type="entry name" value="Calcium ATPase, transmembrane domain M"/>
    <property type="match status" value="1"/>
</dbReference>
<dbReference type="SUPFAM" id="SSF56784">
    <property type="entry name" value="HAD-like"/>
    <property type="match status" value="1"/>
</dbReference>
<dbReference type="PROSITE" id="PS00154">
    <property type="entry name" value="ATPASE_E1_E2"/>
    <property type="match status" value="1"/>
</dbReference>
<reference key="1">
    <citation type="journal article" date="1999" name="Nat. Med.">
        <title>Molecular basis for resistance to silver cations in Salmonella.</title>
        <authorList>
            <person name="Gupta A."/>
            <person name="Matsui K."/>
            <person name="Lo J.-F."/>
            <person name="Silver S."/>
        </authorList>
    </citation>
    <scope>NUCLEOTIDE SEQUENCE [GENOMIC DNA]</scope>
    <scope>CATALYTIC ACTIVITY</scope>
</reference>